<protein>
    <recommendedName>
        <fullName evidence="1">Photosystem II CP47 reaction center protein</fullName>
    </recommendedName>
    <alternativeName>
        <fullName evidence="1">PSII 47 kDa protein</fullName>
    </alternativeName>
    <alternativeName>
        <fullName evidence="1">Protein CP-47</fullName>
    </alternativeName>
</protein>
<dbReference type="EMBL" id="AB237912">
    <property type="protein sequence ID" value="BAE46680.1"/>
    <property type="molecule type" value="Genomic_DNA"/>
</dbReference>
<dbReference type="RefSeq" id="YP_358704.1">
    <property type="nucleotide sequence ID" value="NC_007500.1"/>
</dbReference>
<dbReference type="SMR" id="Q3C1K3"/>
<dbReference type="GeneID" id="3735102"/>
<dbReference type="KEGG" id="nsy:3735102"/>
<dbReference type="OrthoDB" id="17360at4085"/>
<dbReference type="Proteomes" id="UP000189701">
    <property type="component" value="Chloroplast Pltd"/>
</dbReference>
<dbReference type="GO" id="GO:0009535">
    <property type="term" value="C:chloroplast thylakoid membrane"/>
    <property type="evidence" value="ECO:0007669"/>
    <property type="project" value="UniProtKB-SubCell"/>
</dbReference>
<dbReference type="GO" id="GO:0009523">
    <property type="term" value="C:photosystem II"/>
    <property type="evidence" value="ECO:0007669"/>
    <property type="project" value="UniProtKB-KW"/>
</dbReference>
<dbReference type="GO" id="GO:0016168">
    <property type="term" value="F:chlorophyll binding"/>
    <property type="evidence" value="ECO:0007669"/>
    <property type="project" value="UniProtKB-UniRule"/>
</dbReference>
<dbReference type="GO" id="GO:0045156">
    <property type="term" value="F:electron transporter, transferring electrons within the cyclic electron transport pathway of photosynthesis activity"/>
    <property type="evidence" value="ECO:0007669"/>
    <property type="project" value="InterPro"/>
</dbReference>
<dbReference type="GO" id="GO:0009772">
    <property type="term" value="P:photosynthetic electron transport in photosystem II"/>
    <property type="evidence" value="ECO:0007669"/>
    <property type="project" value="InterPro"/>
</dbReference>
<dbReference type="FunFam" id="3.10.680.10:FF:000001">
    <property type="entry name" value="Photosystem II CP47 reaction center protein"/>
    <property type="match status" value="1"/>
</dbReference>
<dbReference type="Gene3D" id="3.10.680.10">
    <property type="entry name" value="Photosystem II CP47 reaction center protein"/>
    <property type="match status" value="1"/>
</dbReference>
<dbReference type="HAMAP" id="MF_01495">
    <property type="entry name" value="PSII_PsbB_CP47"/>
    <property type="match status" value="1"/>
</dbReference>
<dbReference type="InterPro" id="IPR000932">
    <property type="entry name" value="PS_antenna-like"/>
</dbReference>
<dbReference type="InterPro" id="IPR036001">
    <property type="entry name" value="PS_II_antenna-like_sf"/>
</dbReference>
<dbReference type="InterPro" id="IPR017486">
    <property type="entry name" value="PSII_PsbB"/>
</dbReference>
<dbReference type="NCBIfam" id="TIGR03039">
    <property type="entry name" value="PS_II_CP47"/>
    <property type="match status" value="1"/>
</dbReference>
<dbReference type="PANTHER" id="PTHR33180">
    <property type="entry name" value="PHOTOSYSTEM II CP43 REACTION CENTER PROTEIN"/>
    <property type="match status" value="1"/>
</dbReference>
<dbReference type="PANTHER" id="PTHR33180:SF35">
    <property type="entry name" value="PHOTOSYSTEM II CP47 REACTION CENTER PROTEIN"/>
    <property type="match status" value="1"/>
</dbReference>
<dbReference type="Pfam" id="PF00421">
    <property type="entry name" value="PSII"/>
    <property type="match status" value="1"/>
</dbReference>
<dbReference type="SUPFAM" id="SSF161077">
    <property type="entry name" value="Photosystem II antenna protein-like"/>
    <property type="match status" value="1"/>
</dbReference>
<comment type="function">
    <text evidence="1">One of the components of the core complex of photosystem II (PSII). It binds chlorophyll and helps catalyze the primary light-induced photochemical processes of PSII. PSII is a light-driven water:plastoquinone oxidoreductase, using light energy to abstract electrons from H(2)O, generating O(2) and a proton gradient subsequently used for ATP formation.</text>
</comment>
<comment type="cofactor">
    <text evidence="1">Binds multiple chlorophylls. PSII binds additional chlorophylls, carotenoids and specific lipids.</text>
</comment>
<comment type="subunit">
    <text evidence="1">PSII is composed of 1 copy each of membrane proteins PsbA, PsbB, PsbC, PsbD, PsbE, PsbF, PsbH, PsbI, PsbJ, PsbK, PsbL, PsbM, PsbT, PsbX, PsbY, PsbZ, Psb30/Ycf12, at least 3 peripheral proteins of the oxygen-evolving complex and a large number of cofactors. It forms dimeric complexes.</text>
</comment>
<comment type="subcellular location">
    <subcellularLocation>
        <location evidence="1">Plastid</location>
        <location evidence="1">Chloroplast thylakoid membrane</location>
        <topology evidence="1">Multi-pass membrane protein</topology>
    </subcellularLocation>
</comment>
<comment type="similarity">
    <text evidence="1">Belongs to the PsbB/PsbC family. PsbB subfamily.</text>
</comment>
<name>PSBB_NICSY</name>
<keyword id="KW-0148">Chlorophyll</keyword>
<keyword id="KW-0150">Chloroplast</keyword>
<keyword id="KW-0157">Chromophore</keyword>
<keyword id="KW-0472">Membrane</keyword>
<keyword id="KW-0602">Photosynthesis</keyword>
<keyword id="KW-0604">Photosystem II</keyword>
<keyword id="KW-0934">Plastid</keyword>
<keyword id="KW-1185">Reference proteome</keyword>
<keyword id="KW-0793">Thylakoid</keyword>
<keyword id="KW-0812">Transmembrane</keyword>
<keyword id="KW-1133">Transmembrane helix</keyword>
<geneLocation type="chloroplast"/>
<sequence>MGLPWYRVHTVVLNDPGRLLSVHIMHTALVAGWAGSMALYELAVFDPSDPVLDPMWRQGMFVIPFMTRLGITNSWGGWSITGGTVTNPGIWSYEGVAGAHIVFSGLCFLAAIWHWVYWDLEIFCDERTGKPSLDLPKIFGIHLFLSGVACFGFGAFHVTGLYGPGIWVSDPYGLTGKVQPVNPAWGVEGFDPFVPGGIASHHIAAGTLGILAGLFHLSVRPPQRLYKGLRMGNIETVLSSSIAAVFFAAFVVAGTMWYGSATTPIELFGPTRYQWDQGYFQQEIYRRVSAGLAENQSLSEAWSKIPEKLAFYDYIGNNPAKGGLFRAGSMDNGDGIAVGWLGHPIFRDKEGRELFVRRMPTFFETFPVVLVDGDGIVRADVPFRRAESKYSVEQVGVTVEFYGGELNGVSYSDPATVKKYARRAQLGEIFELDRATLKSDGVFRSSPRGWFTFGHASFALLFFFGHIWHGARTLFRDVFAGIDPDLDAQVEFGAFQKLGDPTTKRQAA</sequence>
<evidence type="ECO:0000255" key="1">
    <source>
        <dbReference type="HAMAP-Rule" id="MF_01495"/>
    </source>
</evidence>
<accession>Q3C1K3</accession>
<proteinExistence type="inferred from homology"/>
<reference key="1">
    <citation type="journal article" date="2006" name="Mol. Genet. Genomics">
        <title>The chloroplast genome of Nicotiana sylvestris and Nicotiana tomentosiformis: complete sequencing confirms that the Nicotiana sylvestris progenitor is the maternal genome donor of Nicotiana tabacum.</title>
        <authorList>
            <person name="Yukawa M."/>
            <person name="Tsudzuki T."/>
            <person name="Sugiura M."/>
        </authorList>
    </citation>
    <scope>NUCLEOTIDE SEQUENCE [LARGE SCALE GENOMIC DNA]</scope>
</reference>
<feature type="chain" id="PRO_0000359843" description="Photosystem II CP47 reaction center protein">
    <location>
        <begin position="1"/>
        <end position="508"/>
    </location>
</feature>
<feature type="transmembrane region" description="Helical" evidence="1">
    <location>
        <begin position="21"/>
        <end position="36"/>
    </location>
</feature>
<feature type="transmembrane region" description="Helical" evidence="1">
    <location>
        <begin position="101"/>
        <end position="115"/>
    </location>
</feature>
<feature type="transmembrane region" description="Helical" evidence="1">
    <location>
        <begin position="140"/>
        <end position="156"/>
    </location>
</feature>
<feature type="transmembrane region" description="Helical" evidence="1">
    <location>
        <begin position="203"/>
        <end position="218"/>
    </location>
</feature>
<feature type="transmembrane region" description="Helical" evidence="1">
    <location>
        <begin position="237"/>
        <end position="252"/>
    </location>
</feature>
<feature type="transmembrane region" description="Helical" evidence="1">
    <location>
        <begin position="457"/>
        <end position="472"/>
    </location>
</feature>
<gene>
    <name evidence="1" type="primary">psbB</name>
</gene>
<organism>
    <name type="scientific">Nicotiana sylvestris</name>
    <name type="common">Wood tobacco</name>
    <name type="synonym">South American tobacco</name>
    <dbReference type="NCBI Taxonomy" id="4096"/>
    <lineage>
        <taxon>Eukaryota</taxon>
        <taxon>Viridiplantae</taxon>
        <taxon>Streptophyta</taxon>
        <taxon>Embryophyta</taxon>
        <taxon>Tracheophyta</taxon>
        <taxon>Spermatophyta</taxon>
        <taxon>Magnoliopsida</taxon>
        <taxon>eudicotyledons</taxon>
        <taxon>Gunneridae</taxon>
        <taxon>Pentapetalae</taxon>
        <taxon>asterids</taxon>
        <taxon>lamiids</taxon>
        <taxon>Solanales</taxon>
        <taxon>Solanaceae</taxon>
        <taxon>Nicotianoideae</taxon>
        <taxon>Nicotianeae</taxon>
        <taxon>Nicotiana</taxon>
    </lineage>
</organism>